<feature type="chain" id="PRO_0000427062" description="Multifunctional non-homologous end joining DNA repair protein LigD">
    <location>
        <begin position="1"/>
        <end position="759"/>
    </location>
</feature>
<feature type="DNA-binding region" description="Interaction with target DNA" evidence="1">
    <location>
        <begin position="13"/>
        <end position="16"/>
    </location>
</feature>
<feature type="DNA-binding region" description="Interaction with target DNA" evidence="1">
    <location>
        <position position="26"/>
    </location>
</feature>
<feature type="DNA-binding region" description="Interaction with target DNA" evidence="1">
    <location>
        <begin position="53"/>
        <end position="55"/>
    </location>
</feature>
<feature type="DNA-binding region" description="Interaction with target DNA" evidence="1">
    <location>
        <begin position="63"/>
        <end position="67"/>
    </location>
</feature>
<feature type="DNA-binding region" description="Interaction with target DNA" evidence="1">
    <location>
        <position position="71"/>
    </location>
</feature>
<feature type="DNA-binding region" description="Interaction with target DNA" evidence="1">
    <location>
        <begin position="83"/>
        <end position="88"/>
    </location>
</feature>
<feature type="DNA-binding region" description="Interaction with target DNA" evidence="1">
    <location>
        <position position="104"/>
    </location>
</feature>
<feature type="DNA-binding region" description="Interaction with target DNA" evidence="1">
    <location>
        <position position="137"/>
    </location>
</feature>
<feature type="DNA-binding region" description="Interaction with target DNA" evidence="1">
    <location>
        <begin position="215"/>
        <end position="220"/>
    </location>
</feature>
<feature type="DNA-binding region" description="Interaction with target DNA" evidence="1">
    <location>
        <begin position="227"/>
        <end position="235"/>
    </location>
</feature>
<feature type="region of interest" description="Not required for ligase activity" evidence="1">
    <location>
        <begin position="1"/>
        <end position="411"/>
    </location>
</feature>
<feature type="region of interest" description="DNA repair polymerase domain (Pol); interacts with Ku" evidence="1">
    <location>
        <begin position="9"/>
        <end position="261"/>
    </location>
</feature>
<feature type="region of interest" description="3-phosphoesterase domain (PE)" evidence="1">
    <location>
        <begin position="297"/>
        <end position="446"/>
    </location>
</feature>
<feature type="region of interest" description="Ligase domain (Lig)" evidence="1">
    <location>
        <begin position="460"/>
        <end position="757"/>
    </location>
</feature>
<feature type="region of interest" description="Disordered" evidence="2">
    <location>
        <begin position="740"/>
        <end position="759"/>
    </location>
</feature>
<feature type="compositionally biased region" description="Basic and acidic residues" evidence="2">
    <location>
        <begin position="747"/>
        <end position="759"/>
    </location>
</feature>
<feature type="active site" description="N6-AMP-lysine intermediate; for ligase activity" evidence="1">
    <location>
        <position position="481"/>
    </location>
</feature>
<feature type="binding site" evidence="1">
    <location>
        <position position="52"/>
    </location>
    <ligand>
        <name>substrate</name>
        <note>for polymerase activity</note>
    </ligand>
</feature>
<feature type="binding site" evidence="1">
    <location>
        <position position="111"/>
    </location>
    <ligand>
        <name>substrate</name>
        <note>for polymerase activity</note>
    </ligand>
</feature>
<feature type="binding site" evidence="1">
    <location>
        <begin position="137"/>
        <end position="139"/>
    </location>
    <ligand>
        <name>substrate</name>
        <note>for polymerase activity</note>
    </ligand>
</feature>
<feature type="binding site" evidence="1">
    <location>
        <position position="137"/>
    </location>
    <ligand>
        <name>Mn(2+)</name>
        <dbReference type="ChEBI" id="CHEBI:29035"/>
        <label>1</label>
    </ligand>
</feature>
<feature type="binding site" evidence="1">
    <location>
        <position position="137"/>
    </location>
    <ligand>
        <name>Mn(2+)</name>
        <dbReference type="ChEBI" id="CHEBI:29035"/>
        <label>2</label>
    </ligand>
</feature>
<feature type="binding site" evidence="1">
    <location>
        <position position="139"/>
    </location>
    <ligand>
        <name>Mn(2+)</name>
        <dbReference type="ChEBI" id="CHEBI:29035"/>
        <label>1</label>
    </ligand>
</feature>
<feature type="binding site" evidence="1">
    <location>
        <position position="139"/>
    </location>
    <ligand>
        <name>Mn(2+)</name>
        <dbReference type="ChEBI" id="CHEBI:29035"/>
        <label>2</label>
    </ligand>
</feature>
<feature type="binding site" evidence="1">
    <location>
        <begin position="172"/>
        <end position="178"/>
    </location>
    <ligand>
        <name>substrate</name>
        <note>for polymerase activity</note>
    </ligand>
</feature>
<feature type="binding site" evidence="1">
    <location>
        <position position="227"/>
    </location>
    <ligand>
        <name>Mn(2+)</name>
        <dbReference type="ChEBI" id="CHEBI:29035"/>
        <label>2</label>
    </ligand>
</feature>
<feature type="binding site" evidence="1">
    <location>
        <position position="230"/>
    </location>
    <ligand>
        <name>substrate</name>
        <note>for polymerase activity</note>
    </ligand>
</feature>
<feature type="binding site" evidence="1">
    <location>
        <position position="236"/>
    </location>
    <ligand>
        <name>substrate</name>
        <note>for polymerase activity</note>
    </ligand>
</feature>
<feature type="binding site" evidence="1">
    <location>
        <position position="244"/>
    </location>
    <ligand>
        <name>substrate</name>
        <note>for polymerase activity</note>
    </ligand>
</feature>
<feature type="binding site" evidence="1">
    <location>
        <position position="331"/>
    </location>
    <ligand>
        <name>Mn(2+)</name>
        <dbReference type="ChEBI" id="CHEBI:29035"/>
        <label>3</label>
        <note>catalytic; for 3'-phosphoesterase activity</note>
    </ligand>
</feature>
<feature type="binding site" evidence="1">
    <location>
        <position position="337"/>
    </location>
    <ligand>
        <name>Mn(2+)</name>
        <dbReference type="ChEBI" id="CHEBI:29035"/>
        <label>3</label>
        <note>catalytic; for 3'-phosphoesterase activity</note>
    </ligand>
</feature>
<feature type="binding site" evidence="1">
    <location>
        <position position="339"/>
    </location>
    <ligand>
        <name>Mn(2+)</name>
        <dbReference type="ChEBI" id="CHEBI:29035"/>
        <label>3</label>
        <note>catalytic; for 3'-phosphoesterase activity</note>
    </ligand>
</feature>
<feature type="binding site" evidence="1">
    <location>
        <position position="483"/>
    </location>
    <ligand>
        <name>Mn(2+)</name>
        <dbReference type="ChEBI" id="CHEBI:29035"/>
        <label>4</label>
    </ligand>
</feature>
<feature type="binding site" evidence="1">
    <location>
        <position position="613"/>
    </location>
    <ligand>
        <name>Mn(2+)</name>
        <dbReference type="ChEBI" id="CHEBI:29035"/>
        <label>4</label>
    </ligand>
</feature>
<feature type="site" description="Transition state stabilizer; for 3'-phosphoesterase activity" evidence="1">
    <location>
        <position position="373"/>
    </location>
</feature>
<keyword id="KW-0067">ATP-binding</keyword>
<keyword id="KW-0227">DNA damage</keyword>
<keyword id="KW-0233">DNA recombination</keyword>
<keyword id="KW-0234">DNA repair</keyword>
<keyword id="KW-0238">DNA-binding</keyword>
<keyword id="KW-0239">DNA-directed DNA polymerase</keyword>
<keyword id="KW-0269">Exonuclease</keyword>
<keyword id="KW-0945">Host-virus interaction</keyword>
<keyword id="KW-0378">Hydrolase</keyword>
<keyword id="KW-0436">Ligase</keyword>
<keyword id="KW-0464">Manganese</keyword>
<keyword id="KW-0479">Metal-binding</keyword>
<keyword id="KW-0511">Multifunctional enzyme</keyword>
<keyword id="KW-0540">Nuclease</keyword>
<keyword id="KW-0547">Nucleotide-binding</keyword>
<keyword id="KW-0548">Nucleotidyltransferase</keyword>
<keyword id="KW-1185">Reference proteome</keyword>
<keyword id="KW-0808">Transferase</keyword>
<name>LIGD_MYCTO</name>
<gene>
    <name type="primary">ligD</name>
    <name type="ordered locus">MT0965</name>
</gene>
<accession>P9WNV2</accession>
<accession>L0T5C5</accession>
<accession>O05865</accession>
<accession>P71571</accession>
<evidence type="ECO:0000250" key="1"/>
<evidence type="ECO:0000256" key="2">
    <source>
        <dbReference type="SAM" id="MobiDB-lite"/>
    </source>
</evidence>
<evidence type="ECO:0000305" key="3"/>
<proteinExistence type="inferred from homology"/>
<reference key="1">
    <citation type="journal article" date="2002" name="J. Bacteriol.">
        <title>Whole-genome comparison of Mycobacterium tuberculosis clinical and laboratory strains.</title>
        <authorList>
            <person name="Fleischmann R.D."/>
            <person name="Alland D."/>
            <person name="Eisen J.A."/>
            <person name="Carpenter L."/>
            <person name="White O."/>
            <person name="Peterson J.D."/>
            <person name="DeBoy R.T."/>
            <person name="Dodson R.J."/>
            <person name="Gwinn M.L."/>
            <person name="Haft D.H."/>
            <person name="Hickey E.K."/>
            <person name="Kolonay J.F."/>
            <person name="Nelson W.C."/>
            <person name="Umayam L.A."/>
            <person name="Ermolaeva M.D."/>
            <person name="Salzberg S.L."/>
            <person name="Delcher A."/>
            <person name="Utterback T.R."/>
            <person name="Weidman J.F."/>
            <person name="Khouri H.M."/>
            <person name="Gill J."/>
            <person name="Mikula A."/>
            <person name="Bishai W."/>
            <person name="Jacobs W.R. Jr."/>
            <person name="Venter J.C."/>
            <person name="Fraser C.M."/>
        </authorList>
    </citation>
    <scope>NUCLEOTIDE SEQUENCE [LARGE SCALE GENOMIC DNA]</scope>
    <source>
        <strain>CDC 1551 / Oshkosh</strain>
    </source>
</reference>
<organism>
    <name type="scientific">Mycobacterium tuberculosis (strain CDC 1551 / Oshkosh)</name>
    <dbReference type="NCBI Taxonomy" id="83331"/>
    <lineage>
        <taxon>Bacteria</taxon>
        <taxon>Bacillati</taxon>
        <taxon>Actinomycetota</taxon>
        <taxon>Actinomycetes</taxon>
        <taxon>Mycobacteriales</taxon>
        <taxon>Mycobacteriaceae</taxon>
        <taxon>Mycobacterium</taxon>
        <taxon>Mycobacterium tuberculosis complex</taxon>
    </lineage>
</organism>
<sequence>MGSASEQRVTLTNADKVLYPATGTTKSDIFDYYAGVAEVMLGHIAGRPATRKRWPNGVDQPAFFEKQLALSAPPWLSRATVAHRSGTTTYPIIDSATGLAWIAQQAALEVHVPQWRFVAEPGSGELNPGPATRLVFDLDPGEGVMMAQLAEVARAVRDLLADIGLVTFPVTSGSKGLHLYTPLDEPVSSRGATVLAKRVAQRLEQAMPALVTSTMTKSLRAGKVFVDWSQNSGSKTTIAPYSLRGRTHPTVAAPRTWAELDDPALRQLSYDEVLTRIARDGDLLERLDADAPVADRLTRYRRMRDASKTPEPIPTAKPVTGDGNTFVIQEHHARRPHYDFRLERDGVLVSWAVPKNLPDNTSVNHLAIHTEDHPLEYATFEGAIPSGEYGAGKVIIWDSGTYDTEKFHDDPHTGEVIVNLHGGRISGRYALIRTNGDRWLAHRLKNQKDQKVFEFDNLAPMLATHGTVAGLKASQWAFEGKWDGYRLLVEADHGAVRLRSRSGRDVTAEYPQLRALAEDLADHHVVLDGEAVVLDSSGVPSFSQMQNRGRDTRVEFWAFDLLYLDGRALLGTRYQDRRKLLETLANATSLTVPELLPGDGAQAFACSRKHGWEGVIAKRRDSRYQPGRRCASWVKDKHWNTQEVVIGGWRAGEGGRSSGVGSLLMGIPGPGGLQFAGRVGTGLSERELANLKEMLAPLHTDESPFDVPLPARDAKGITYVKPALVAEVRYSEWTPEGRLRQSSWRGLRPDKKPSEVVRE</sequence>
<protein>
    <recommendedName>
        <fullName>Multifunctional non-homologous end joining DNA repair protein LigD</fullName>
        <shortName>NHEJ DNA repair protein D</shortName>
    </recommendedName>
    <alternativeName>
        <fullName>Mt-Lig</fullName>
    </alternativeName>
    <alternativeName>
        <fullName>NHEJ DNA polymerase</fullName>
    </alternativeName>
    <domain>
        <recommendedName>
            <fullName>DNA repair polymerase</fullName>
            <shortName>Pol</shortName>
        </recommendedName>
        <alternativeName>
            <fullName>Polymerase/primase</fullName>
        </alternativeName>
    </domain>
    <domain>
        <recommendedName>
            <fullName>3'-phosphoesterase</fullName>
            <shortName>3'-ribonuclease/3'-phosphatase</shortName>
            <shortName>PE</shortName>
        </recommendedName>
    </domain>
    <domain>
        <recommendedName>
            <fullName>DNA ligase</fullName>
            <shortName>Lig</shortName>
            <ecNumber>6.5.1.1</ecNumber>
        </recommendedName>
        <alternativeName>
            <fullName>Polydeoxyribonucleotide synthase [ATP]</fullName>
        </alternativeName>
    </domain>
</protein>
<comment type="function">
    <text evidence="1">With Ku forms a non-homologous end joining (NHEJ) repair enzyme which repairs DNA double-strand breaks (DSB) with reduced fidelity. Recognizes, processes and reseals DSBs, including repairs on incompatible DSB which require 3'-resection, gap filling and ligation. Anneals the 3' overhanging strands from opposing breaks to form a gapped intermediate, which then can be extended in trans by using the termini as primers for extension of the annealed break. Binds to the recessed 5'-phosphate moiety of the downstream DNA strand forming a stable synaptic complex even when the 3'-protruding ends of the template DNA strands are not complementary.</text>
</comment>
<comment type="function">
    <text evidence="1">The preference of the polymerase domain for rNTPs over dNTPs may be advantageous in dormant cells, where the dNTP pool is limiting.</text>
</comment>
<comment type="catalytic activity">
    <reaction>
        <text>ATP + (deoxyribonucleotide)n-3'-hydroxyl + 5'-phospho-(deoxyribonucleotide)m = (deoxyribonucleotide)n+m + AMP + diphosphate.</text>
        <dbReference type="EC" id="6.5.1.1"/>
    </reaction>
</comment>
<comment type="cofactor">
    <cofactor evidence="1">
        <name>Mn(2+)</name>
        <dbReference type="ChEBI" id="CHEBI:29035"/>
    </cofactor>
    <text evidence="1">Binds 4 Mn(2+); 2 Mn(2+) for polymerase/primase activity, 1 each for 3-phosphoesterase and ligase.</text>
</comment>
<comment type="subunit">
    <text evidence="1">Monomer. Component of the NHEJ repair enzyme with mKu (By similarity).</text>
</comment>
<comment type="similarity">
    <text evidence="3">In the N-terminal section; belongs to the LigD polymerase family.</text>
</comment>
<comment type="similarity">
    <text evidence="3">In the central section; belongs to the LigD 3'-phosphoesterase family.</text>
</comment>
<comment type="similarity">
    <text evidence="3">In the C-terminal section; belongs to the ATP-dependent DNA ligase family.</text>
</comment>
<dbReference type="EC" id="6.5.1.1"/>
<dbReference type="EMBL" id="AE000516">
    <property type="protein sequence ID" value="AAK45212.1"/>
    <property type="molecule type" value="Genomic_DNA"/>
</dbReference>
<dbReference type="PIR" id="B70585">
    <property type="entry name" value="B70585"/>
</dbReference>
<dbReference type="RefSeq" id="WP_003898655.1">
    <property type="nucleotide sequence ID" value="NZ_KK341227.1"/>
</dbReference>
<dbReference type="SMR" id="P9WNV2"/>
<dbReference type="KEGG" id="mtc:MT0965"/>
<dbReference type="PATRIC" id="fig|83331.31.peg.1035"/>
<dbReference type="HOGENOM" id="CLU_008325_2_1_11"/>
<dbReference type="Proteomes" id="UP000001020">
    <property type="component" value="Chromosome"/>
</dbReference>
<dbReference type="GO" id="GO:0005524">
    <property type="term" value="F:ATP binding"/>
    <property type="evidence" value="ECO:0007669"/>
    <property type="project" value="UniProtKB-KW"/>
</dbReference>
<dbReference type="GO" id="GO:0003677">
    <property type="term" value="F:DNA binding"/>
    <property type="evidence" value="ECO:0007669"/>
    <property type="project" value="UniProtKB-KW"/>
</dbReference>
<dbReference type="GO" id="GO:0003910">
    <property type="term" value="F:DNA ligase (ATP) activity"/>
    <property type="evidence" value="ECO:0007669"/>
    <property type="project" value="UniProtKB-EC"/>
</dbReference>
<dbReference type="GO" id="GO:0003887">
    <property type="term" value="F:DNA-directed DNA polymerase activity"/>
    <property type="evidence" value="ECO:0007669"/>
    <property type="project" value="UniProtKB-KW"/>
</dbReference>
<dbReference type="GO" id="GO:0004527">
    <property type="term" value="F:exonuclease activity"/>
    <property type="evidence" value="ECO:0007669"/>
    <property type="project" value="UniProtKB-KW"/>
</dbReference>
<dbReference type="GO" id="GO:0046872">
    <property type="term" value="F:metal ion binding"/>
    <property type="evidence" value="ECO:0007669"/>
    <property type="project" value="UniProtKB-KW"/>
</dbReference>
<dbReference type="GO" id="GO:0006310">
    <property type="term" value="P:DNA recombination"/>
    <property type="evidence" value="ECO:0007669"/>
    <property type="project" value="UniProtKB-KW"/>
</dbReference>
<dbReference type="GO" id="GO:0006281">
    <property type="term" value="P:DNA repair"/>
    <property type="evidence" value="ECO:0007669"/>
    <property type="project" value="UniProtKB-KW"/>
</dbReference>
<dbReference type="CDD" id="cd07906">
    <property type="entry name" value="Adenylation_DNA_ligase_LigD_LigC"/>
    <property type="match status" value="1"/>
</dbReference>
<dbReference type="CDD" id="cd04863">
    <property type="entry name" value="MtLigD_Pol_like"/>
    <property type="match status" value="1"/>
</dbReference>
<dbReference type="CDD" id="cd07971">
    <property type="entry name" value="OBF_DNA_ligase_LigD"/>
    <property type="match status" value="1"/>
</dbReference>
<dbReference type="FunFam" id="3.30.470.30:FF:000031">
    <property type="entry name" value="Multifunctional non-homologous end joining protein LigD"/>
    <property type="match status" value="1"/>
</dbReference>
<dbReference type="FunFam" id="3.90.920.10:FF:000007">
    <property type="entry name" value="Possible ATP dependant DNA ligase"/>
    <property type="match status" value="1"/>
</dbReference>
<dbReference type="FunFam" id="2.40.50.140:FF:000292">
    <property type="entry name" value="Probable ATP-dependent DNA ligase"/>
    <property type="match status" value="1"/>
</dbReference>
<dbReference type="Gene3D" id="3.30.1490.70">
    <property type="match status" value="1"/>
</dbReference>
<dbReference type="Gene3D" id="3.30.470.30">
    <property type="entry name" value="DNA ligase/mRNA capping enzyme"/>
    <property type="match status" value="1"/>
</dbReference>
<dbReference type="Gene3D" id="3.90.920.10">
    <property type="entry name" value="DNA primase, PRIM domain"/>
    <property type="match status" value="1"/>
</dbReference>
<dbReference type="Gene3D" id="2.40.50.140">
    <property type="entry name" value="Nucleic acid-binding proteins"/>
    <property type="match status" value="1"/>
</dbReference>
<dbReference type="InterPro" id="IPR012309">
    <property type="entry name" value="DNA_ligase_ATP-dep_C"/>
</dbReference>
<dbReference type="InterPro" id="IPR012310">
    <property type="entry name" value="DNA_ligase_ATP-dep_cent"/>
</dbReference>
<dbReference type="InterPro" id="IPR014146">
    <property type="entry name" value="LigD_ligase_dom"/>
</dbReference>
<dbReference type="InterPro" id="IPR014144">
    <property type="entry name" value="LigD_PE_domain"/>
</dbReference>
<dbReference type="InterPro" id="IPR014145">
    <property type="entry name" value="LigD_pol_dom"/>
</dbReference>
<dbReference type="InterPro" id="IPR033649">
    <property type="entry name" value="MtLigD_Pol-like"/>
</dbReference>
<dbReference type="InterPro" id="IPR012340">
    <property type="entry name" value="NA-bd_OB-fold"/>
</dbReference>
<dbReference type="InterPro" id="IPR052171">
    <property type="entry name" value="NHEJ_LigD"/>
</dbReference>
<dbReference type="NCBIfam" id="TIGR02777">
    <property type="entry name" value="LigD_PE_dom"/>
    <property type="match status" value="1"/>
</dbReference>
<dbReference type="NCBIfam" id="TIGR02778">
    <property type="entry name" value="ligD_pol"/>
    <property type="match status" value="1"/>
</dbReference>
<dbReference type="NCBIfam" id="TIGR02779">
    <property type="entry name" value="NHEJ_ligase_lig"/>
    <property type="match status" value="1"/>
</dbReference>
<dbReference type="NCBIfam" id="NF007210">
    <property type="entry name" value="PRK09632.1"/>
    <property type="match status" value="1"/>
</dbReference>
<dbReference type="PANTHER" id="PTHR42705">
    <property type="entry name" value="BIFUNCTIONAL NON-HOMOLOGOUS END JOINING PROTEIN LIGD"/>
    <property type="match status" value="1"/>
</dbReference>
<dbReference type="PANTHER" id="PTHR42705:SF2">
    <property type="entry name" value="BIFUNCTIONAL NON-HOMOLOGOUS END JOINING PROTEIN LIGD"/>
    <property type="match status" value="1"/>
</dbReference>
<dbReference type="Pfam" id="PF04679">
    <property type="entry name" value="DNA_ligase_A_C"/>
    <property type="match status" value="1"/>
</dbReference>
<dbReference type="Pfam" id="PF01068">
    <property type="entry name" value="DNA_ligase_A_M"/>
    <property type="match status" value="1"/>
</dbReference>
<dbReference type="Pfam" id="PF13298">
    <property type="entry name" value="LigD_N"/>
    <property type="match status" value="1"/>
</dbReference>
<dbReference type="Pfam" id="PF21686">
    <property type="entry name" value="LigD_Prim-Pol"/>
    <property type="match status" value="1"/>
</dbReference>
<dbReference type="SUPFAM" id="SSF56091">
    <property type="entry name" value="DNA ligase/mRNA capping enzyme, catalytic domain"/>
    <property type="match status" value="1"/>
</dbReference>
<dbReference type="SUPFAM" id="SSF50249">
    <property type="entry name" value="Nucleic acid-binding proteins"/>
    <property type="match status" value="1"/>
</dbReference>
<dbReference type="PROSITE" id="PS50160">
    <property type="entry name" value="DNA_LIGASE_A3"/>
    <property type="match status" value="1"/>
</dbReference>